<dbReference type="EMBL" id="AC133007">
    <property type="protein sequence ID" value="AAO60016.1"/>
    <property type="status" value="ALT_INIT"/>
    <property type="molecule type" value="Genomic_DNA"/>
</dbReference>
<dbReference type="EMBL" id="DP000009">
    <property type="protein sequence ID" value="ABF99555.1"/>
    <property type="status" value="ALT_INIT"/>
    <property type="molecule type" value="Genomic_DNA"/>
</dbReference>
<dbReference type="EMBL" id="AP008209">
    <property type="protein sequence ID" value="BAF13613.2"/>
    <property type="status" value="ALT_INIT"/>
    <property type="molecule type" value="Genomic_DNA"/>
</dbReference>
<dbReference type="EMBL" id="AP014959">
    <property type="protein sequence ID" value="BAS87052.1"/>
    <property type="molecule type" value="Genomic_DNA"/>
</dbReference>
<dbReference type="EMBL" id="CM000140">
    <property type="protein sequence ID" value="EEE60178.1"/>
    <property type="molecule type" value="Genomic_DNA"/>
</dbReference>
<dbReference type="EMBL" id="EE590935">
    <property type="status" value="NOT_ANNOTATED_CDS"/>
    <property type="molecule type" value="mRNA"/>
</dbReference>
<dbReference type="RefSeq" id="XP_015629369.1">
    <property type="nucleotide sequence ID" value="XM_015773883.1"/>
</dbReference>
<dbReference type="SMR" id="B9F6Z0"/>
<dbReference type="FunCoup" id="B9F6Z0">
    <property type="interactions" value="1"/>
</dbReference>
<dbReference type="PaxDb" id="39947-B9F6Z0"/>
<dbReference type="EnsemblPlants" id="Os03t0817100-00">
    <property type="protein sequence ID" value="Os03t0817100-00"/>
    <property type="gene ID" value="Os03g0817100"/>
</dbReference>
<dbReference type="Gramene" id="Os03t0817100-00">
    <property type="protein sequence ID" value="Os03t0817100-00"/>
    <property type="gene ID" value="Os03g0817100"/>
</dbReference>
<dbReference type="KEGG" id="dosa:Os03g0817100"/>
<dbReference type="eggNOG" id="ENOG502RYC3">
    <property type="taxonomic scope" value="Eukaryota"/>
</dbReference>
<dbReference type="HOGENOM" id="CLU_048961_4_1_1"/>
<dbReference type="InParanoid" id="B9F6Z0"/>
<dbReference type="OMA" id="LEMNIDV"/>
<dbReference type="OrthoDB" id="1924823at2759"/>
<dbReference type="Proteomes" id="UP000000763">
    <property type="component" value="Chromosome 3"/>
</dbReference>
<dbReference type="Proteomes" id="UP000007752">
    <property type="component" value="Chromosome 3"/>
</dbReference>
<dbReference type="Proteomes" id="UP000059680">
    <property type="component" value="Chromosome 3"/>
</dbReference>
<dbReference type="GO" id="GO:0005886">
    <property type="term" value="C:plasma membrane"/>
    <property type="evidence" value="ECO:0007669"/>
    <property type="project" value="UniProtKB-SubCell"/>
</dbReference>
<dbReference type="InterPro" id="IPR006702">
    <property type="entry name" value="CASP_dom"/>
</dbReference>
<dbReference type="PANTHER" id="PTHR33573">
    <property type="entry name" value="CASP-LIKE PROTEIN 4A4"/>
    <property type="match status" value="1"/>
</dbReference>
<dbReference type="PANTHER" id="PTHR33573:SF60">
    <property type="entry name" value="CASP-LIKE PROTEIN 4B3"/>
    <property type="match status" value="1"/>
</dbReference>
<dbReference type="Pfam" id="PF04535">
    <property type="entry name" value="CASP_dom"/>
    <property type="match status" value="1"/>
</dbReference>
<protein>
    <recommendedName>
        <fullName>CASP-like protein 4B3</fullName>
        <shortName>OsCASPL4B3</shortName>
    </recommendedName>
</protein>
<sequence length="198" mass="20536">MSSSGPPAGDGRDDASGPGPAGAAAAADGSVPVSRSIVERWKMEPAAARARLLLRAVAWLFSLLALVVMASNKHGHGGAQDFDNYPEYTYCLGISIIAVLYTTAQVTRDVHRLSWGRDVIAGRKAAAVVDFAGDQVVAYLLMSALSAAAPVTDYMRQAADNLFTDSAAAAISMAFLAFLAAGLSALVSGYNLAMEVLV</sequence>
<feature type="chain" id="PRO_0000391591" description="CASP-like protein 4B3">
    <location>
        <begin position="1"/>
        <end position="198"/>
    </location>
</feature>
<feature type="topological domain" description="Cytoplasmic" evidence="2">
    <location>
        <begin position="1"/>
        <end position="51"/>
    </location>
</feature>
<feature type="transmembrane region" description="Helical" evidence="2">
    <location>
        <begin position="52"/>
        <end position="72"/>
    </location>
</feature>
<feature type="topological domain" description="Extracellular" evidence="2">
    <location>
        <begin position="73"/>
        <end position="85"/>
    </location>
</feature>
<feature type="transmembrane region" description="Helical" evidence="2">
    <location>
        <begin position="86"/>
        <end position="106"/>
    </location>
</feature>
<feature type="topological domain" description="Cytoplasmic" evidence="2">
    <location>
        <begin position="107"/>
        <end position="124"/>
    </location>
</feature>
<feature type="transmembrane region" description="Helical" evidence="2">
    <location>
        <begin position="125"/>
        <end position="145"/>
    </location>
</feature>
<feature type="topological domain" description="Extracellular" evidence="2">
    <location>
        <begin position="146"/>
        <end position="166"/>
    </location>
</feature>
<feature type="transmembrane region" description="Helical" evidence="2">
    <location>
        <begin position="167"/>
        <end position="187"/>
    </location>
</feature>
<feature type="topological domain" description="Cytoplasmic" evidence="2">
    <location>
        <begin position="188"/>
        <end position="198"/>
    </location>
</feature>
<feature type="region of interest" description="Disordered" evidence="3">
    <location>
        <begin position="1"/>
        <end position="27"/>
    </location>
</feature>
<feature type="compositionally biased region" description="Low complexity" evidence="3">
    <location>
        <begin position="16"/>
        <end position="27"/>
    </location>
</feature>
<feature type="sequence conflict" description="In Ref. 6; EE590935." evidence="4" ref="6">
    <original>GG</original>
    <variation>RA</variation>
    <location>
        <begin position="77"/>
        <end position="78"/>
    </location>
</feature>
<accession>B9F6Z0</accession>
<accession>A0A0P0W4N7</accession>
<accession>Q0DMC5</accession>
<accession>Q84TX4</accession>
<gene>
    <name type="ordered locus">Os03g0817100</name>
    <name type="ordered locus">LOC_Os03g60250</name>
    <name type="ORF">OsJ_13110</name>
    <name type="ORF">OSJNBa0094J08.19</name>
</gene>
<reference key="1">
    <citation type="journal article" date="2005" name="Genome Res.">
        <title>Sequence, annotation, and analysis of synteny between rice chromosome 3 and diverged grass species.</title>
        <authorList>
            <consortium name="The rice chromosome 3 sequencing consortium"/>
            <person name="Buell C.R."/>
            <person name="Yuan Q."/>
            <person name="Ouyang S."/>
            <person name="Liu J."/>
            <person name="Zhu W."/>
            <person name="Wang A."/>
            <person name="Maiti R."/>
            <person name="Haas B."/>
            <person name="Wortman J."/>
            <person name="Pertea M."/>
            <person name="Jones K.M."/>
            <person name="Kim M."/>
            <person name="Overton L."/>
            <person name="Tsitrin T."/>
            <person name="Fadrosh D."/>
            <person name="Bera J."/>
            <person name="Weaver B."/>
            <person name="Jin S."/>
            <person name="Johri S."/>
            <person name="Reardon M."/>
            <person name="Webb K."/>
            <person name="Hill J."/>
            <person name="Moffat K."/>
            <person name="Tallon L."/>
            <person name="Van Aken S."/>
            <person name="Lewis M."/>
            <person name="Utterback T."/>
            <person name="Feldblyum T."/>
            <person name="Zismann V."/>
            <person name="Iobst S."/>
            <person name="Hsiao J."/>
            <person name="de Vazeille A.R."/>
            <person name="Salzberg S.L."/>
            <person name="White O."/>
            <person name="Fraser C.M."/>
            <person name="Yu Y."/>
            <person name="Kim H."/>
            <person name="Rambo T."/>
            <person name="Currie J."/>
            <person name="Collura K."/>
            <person name="Kernodle-Thompson S."/>
            <person name="Wei F."/>
            <person name="Kudrna K."/>
            <person name="Ammiraju J.S.S."/>
            <person name="Luo M."/>
            <person name="Goicoechea J.L."/>
            <person name="Wing R.A."/>
            <person name="Henry D."/>
            <person name="Oates R."/>
            <person name="Palmer M."/>
            <person name="Pries G."/>
            <person name="Saski C."/>
            <person name="Simmons J."/>
            <person name="Soderlund C."/>
            <person name="Nelson W."/>
            <person name="de la Bastide M."/>
            <person name="Spiegel L."/>
            <person name="Nascimento L."/>
            <person name="Huang E."/>
            <person name="Preston R."/>
            <person name="Zutavern T."/>
            <person name="Palmer L."/>
            <person name="O'Shaughnessy A."/>
            <person name="Dike S."/>
            <person name="McCombie W.R."/>
            <person name="Minx P."/>
            <person name="Cordum H."/>
            <person name="Wilson R."/>
            <person name="Jin W."/>
            <person name="Lee H.R."/>
            <person name="Jiang J."/>
            <person name="Jackson S."/>
        </authorList>
    </citation>
    <scope>NUCLEOTIDE SEQUENCE [LARGE SCALE GENOMIC DNA]</scope>
    <source>
        <strain>cv. Nipponbare</strain>
    </source>
</reference>
<reference key="2">
    <citation type="journal article" date="2005" name="Nature">
        <title>The map-based sequence of the rice genome.</title>
        <authorList>
            <consortium name="International rice genome sequencing project (IRGSP)"/>
        </authorList>
    </citation>
    <scope>NUCLEOTIDE SEQUENCE [LARGE SCALE GENOMIC DNA]</scope>
    <source>
        <strain>cv. Nipponbare</strain>
    </source>
</reference>
<reference key="3">
    <citation type="journal article" date="2008" name="Nucleic Acids Res.">
        <title>The rice annotation project database (RAP-DB): 2008 update.</title>
        <authorList>
            <consortium name="The rice annotation project (RAP)"/>
        </authorList>
    </citation>
    <scope>GENOME REANNOTATION</scope>
    <source>
        <strain>cv. Nipponbare</strain>
    </source>
</reference>
<reference key="4">
    <citation type="journal article" date="2013" name="Rice">
        <title>Improvement of the Oryza sativa Nipponbare reference genome using next generation sequence and optical map data.</title>
        <authorList>
            <person name="Kawahara Y."/>
            <person name="de la Bastide M."/>
            <person name="Hamilton J.P."/>
            <person name="Kanamori H."/>
            <person name="McCombie W.R."/>
            <person name="Ouyang S."/>
            <person name="Schwartz D.C."/>
            <person name="Tanaka T."/>
            <person name="Wu J."/>
            <person name="Zhou S."/>
            <person name="Childs K.L."/>
            <person name="Davidson R.M."/>
            <person name="Lin H."/>
            <person name="Quesada-Ocampo L."/>
            <person name="Vaillancourt B."/>
            <person name="Sakai H."/>
            <person name="Lee S.S."/>
            <person name="Kim J."/>
            <person name="Numa H."/>
            <person name="Itoh T."/>
            <person name="Buell C.R."/>
            <person name="Matsumoto T."/>
        </authorList>
    </citation>
    <scope>GENOME REANNOTATION</scope>
    <source>
        <strain>cv. Nipponbare</strain>
    </source>
</reference>
<reference key="5">
    <citation type="journal article" date="2005" name="PLoS Biol.">
        <title>The genomes of Oryza sativa: a history of duplications.</title>
        <authorList>
            <person name="Yu J."/>
            <person name="Wang J."/>
            <person name="Lin W."/>
            <person name="Li S."/>
            <person name="Li H."/>
            <person name="Zhou J."/>
            <person name="Ni P."/>
            <person name="Dong W."/>
            <person name="Hu S."/>
            <person name="Zeng C."/>
            <person name="Zhang J."/>
            <person name="Zhang Y."/>
            <person name="Li R."/>
            <person name="Xu Z."/>
            <person name="Li S."/>
            <person name="Li X."/>
            <person name="Zheng H."/>
            <person name="Cong L."/>
            <person name="Lin L."/>
            <person name="Yin J."/>
            <person name="Geng J."/>
            <person name="Li G."/>
            <person name="Shi J."/>
            <person name="Liu J."/>
            <person name="Lv H."/>
            <person name="Li J."/>
            <person name="Wang J."/>
            <person name="Deng Y."/>
            <person name="Ran L."/>
            <person name="Shi X."/>
            <person name="Wang X."/>
            <person name="Wu Q."/>
            <person name="Li C."/>
            <person name="Ren X."/>
            <person name="Wang J."/>
            <person name="Wang X."/>
            <person name="Li D."/>
            <person name="Liu D."/>
            <person name="Zhang X."/>
            <person name="Ji Z."/>
            <person name="Zhao W."/>
            <person name="Sun Y."/>
            <person name="Zhang Z."/>
            <person name="Bao J."/>
            <person name="Han Y."/>
            <person name="Dong L."/>
            <person name="Ji J."/>
            <person name="Chen P."/>
            <person name="Wu S."/>
            <person name="Liu J."/>
            <person name="Xiao Y."/>
            <person name="Bu D."/>
            <person name="Tan J."/>
            <person name="Yang L."/>
            <person name="Ye C."/>
            <person name="Zhang J."/>
            <person name="Xu J."/>
            <person name="Zhou Y."/>
            <person name="Yu Y."/>
            <person name="Zhang B."/>
            <person name="Zhuang S."/>
            <person name="Wei H."/>
            <person name="Liu B."/>
            <person name="Lei M."/>
            <person name="Yu H."/>
            <person name="Li Y."/>
            <person name="Xu H."/>
            <person name="Wei S."/>
            <person name="He X."/>
            <person name="Fang L."/>
            <person name="Zhang Z."/>
            <person name="Zhang Y."/>
            <person name="Huang X."/>
            <person name="Su Z."/>
            <person name="Tong W."/>
            <person name="Li J."/>
            <person name="Tong Z."/>
            <person name="Li S."/>
            <person name="Ye J."/>
            <person name="Wang L."/>
            <person name="Fang L."/>
            <person name="Lei T."/>
            <person name="Chen C.-S."/>
            <person name="Chen H.-C."/>
            <person name="Xu Z."/>
            <person name="Li H."/>
            <person name="Huang H."/>
            <person name="Zhang F."/>
            <person name="Xu H."/>
            <person name="Li N."/>
            <person name="Zhao C."/>
            <person name="Li S."/>
            <person name="Dong L."/>
            <person name="Huang Y."/>
            <person name="Li L."/>
            <person name="Xi Y."/>
            <person name="Qi Q."/>
            <person name="Li W."/>
            <person name="Zhang B."/>
            <person name="Hu W."/>
            <person name="Zhang Y."/>
            <person name="Tian X."/>
            <person name="Jiao Y."/>
            <person name="Liang X."/>
            <person name="Jin J."/>
            <person name="Gao L."/>
            <person name="Zheng W."/>
            <person name="Hao B."/>
            <person name="Liu S.-M."/>
            <person name="Wang W."/>
            <person name="Yuan L."/>
            <person name="Cao M."/>
            <person name="McDermott J."/>
            <person name="Samudrala R."/>
            <person name="Wang J."/>
            <person name="Wong G.K.-S."/>
            <person name="Yang H."/>
        </authorList>
    </citation>
    <scope>NUCLEOTIDE SEQUENCE [LARGE SCALE GENOMIC DNA]</scope>
    <source>
        <strain>cv. Nipponbare</strain>
    </source>
</reference>
<reference key="6">
    <citation type="submission" date="2006-08" db="EMBL/GenBank/DDBJ databases">
        <title>Collection, mapping, and annotation of over novel 2000 cDNA clones from japonica Rice.</title>
        <authorList>
            <person name="Yang X."/>
            <person name="Cheng X."/>
            <person name="Yang J."/>
            <person name="Zhang L."/>
            <person name="Wang X."/>
            <person name="Xia M."/>
        </authorList>
    </citation>
    <scope>NUCLEOTIDE SEQUENCE [LARGE SCALE MRNA] OF 38-198</scope>
    <source>
        <tissue>Leaf</tissue>
        <tissue>Panicle</tissue>
        <tissue>Root</tissue>
    </source>
</reference>
<reference key="7">
    <citation type="journal article" date="2014" name="Plant Physiol.">
        <title>Functional and evolutionary analysis of the CASPARIAN STRIP MEMBRANE DOMAIN PROTEIN family.</title>
        <authorList>
            <person name="Roppolo D."/>
            <person name="Boeckmann B."/>
            <person name="Pfister A."/>
            <person name="Boutet E."/>
            <person name="Rubio M.C."/>
            <person name="Denervaud-Tendon V."/>
            <person name="Vermeer J.E."/>
            <person name="Gheyselinck J."/>
            <person name="Xenarios I."/>
            <person name="Geldner N."/>
        </authorList>
    </citation>
    <scope>GENE FAMILY</scope>
    <scope>NOMENCLATURE</scope>
</reference>
<keyword id="KW-1003">Cell membrane</keyword>
<keyword id="KW-0472">Membrane</keyword>
<keyword id="KW-1185">Reference proteome</keyword>
<keyword id="KW-0812">Transmembrane</keyword>
<keyword id="KW-1133">Transmembrane helix</keyword>
<proteinExistence type="evidence at transcript level"/>
<evidence type="ECO:0000250" key="1"/>
<evidence type="ECO:0000255" key="2"/>
<evidence type="ECO:0000256" key="3">
    <source>
        <dbReference type="SAM" id="MobiDB-lite"/>
    </source>
</evidence>
<evidence type="ECO:0000305" key="4"/>
<comment type="subunit">
    <text evidence="1">Homodimer and heterodimers.</text>
</comment>
<comment type="subcellular location">
    <subcellularLocation>
        <location evidence="1">Cell membrane</location>
        <topology evidence="1">Multi-pass membrane protein</topology>
    </subcellularLocation>
</comment>
<comment type="similarity">
    <text evidence="4">Belongs to the Casparian strip membrane proteins (CASP) family.</text>
</comment>
<comment type="sequence caution" evidence="4">
    <conflict type="erroneous initiation">
        <sequence resource="EMBL-CDS" id="AAO60016"/>
    </conflict>
    <text>Truncated N-terminus.</text>
</comment>
<comment type="sequence caution" evidence="4">
    <conflict type="erroneous initiation">
        <sequence resource="EMBL-CDS" id="ABF99555"/>
    </conflict>
    <text>Truncated N-terminus.</text>
</comment>
<comment type="sequence caution" evidence="4">
    <conflict type="erroneous initiation">
        <sequence resource="EMBL-CDS" id="BAF13613"/>
    </conflict>
    <text>Truncated N-terminus.</text>
</comment>
<organism>
    <name type="scientific">Oryza sativa subsp. japonica</name>
    <name type="common">Rice</name>
    <dbReference type="NCBI Taxonomy" id="39947"/>
    <lineage>
        <taxon>Eukaryota</taxon>
        <taxon>Viridiplantae</taxon>
        <taxon>Streptophyta</taxon>
        <taxon>Embryophyta</taxon>
        <taxon>Tracheophyta</taxon>
        <taxon>Spermatophyta</taxon>
        <taxon>Magnoliopsida</taxon>
        <taxon>Liliopsida</taxon>
        <taxon>Poales</taxon>
        <taxon>Poaceae</taxon>
        <taxon>BOP clade</taxon>
        <taxon>Oryzoideae</taxon>
        <taxon>Oryzeae</taxon>
        <taxon>Oryzinae</taxon>
        <taxon>Oryza</taxon>
        <taxon>Oryza sativa</taxon>
    </lineage>
</organism>
<name>CSPLH_ORYSJ</name>